<organism>
    <name type="scientific">Rickettsia rickettsii (strain Sheila Smith)</name>
    <dbReference type="NCBI Taxonomy" id="392021"/>
    <lineage>
        <taxon>Bacteria</taxon>
        <taxon>Pseudomonadati</taxon>
        <taxon>Pseudomonadota</taxon>
        <taxon>Alphaproteobacteria</taxon>
        <taxon>Rickettsiales</taxon>
        <taxon>Rickettsiaceae</taxon>
        <taxon>Rickettsieae</taxon>
        <taxon>Rickettsia</taxon>
        <taxon>spotted fever group</taxon>
    </lineage>
</organism>
<comment type="function">
    <text evidence="1">One of several proteins that assist in the late maturation steps of the functional core of the 30S ribosomal subunit. Associates with free 30S ribosomal subunits (but not with 30S subunits that are part of 70S ribosomes or polysomes). Required for efficient processing of 16S rRNA. May interact with the 5'-terminal helix region of 16S rRNA.</text>
</comment>
<comment type="subunit">
    <text evidence="1">Monomer. Binds 30S ribosomal subunits, but not 50S ribosomal subunits or 70S ribosomes.</text>
</comment>
<comment type="subcellular location">
    <subcellularLocation>
        <location evidence="1">Cytoplasm</location>
    </subcellularLocation>
</comment>
<comment type="similarity">
    <text evidence="1">Belongs to the RbfA family.</text>
</comment>
<accession>A8GS39</accession>
<gene>
    <name evidence="1" type="primary">rbfA</name>
    <name type="ordered locus">A1G_03415</name>
</gene>
<proteinExistence type="inferred from homology"/>
<keyword id="KW-0963">Cytoplasm</keyword>
<keyword id="KW-0690">Ribosome biogenesis</keyword>
<name>RBFA_RICRS</name>
<sequence>MKKLTKTHSHRQQKLASIINEALIEILRRGKMLDSRLFDCPLTITKVIVTTDLKIANCYFLPFNTKLTIDEIMDALNNSKNAIRNFITNKIHMKFSPDIRFHYDHGFDNAIKVAHLLKDL</sequence>
<reference key="1">
    <citation type="submission" date="2007-09" db="EMBL/GenBank/DDBJ databases">
        <title>Complete genome sequence of Rickettsia rickettsii.</title>
        <authorList>
            <person name="Madan A."/>
            <person name="Fahey J."/>
            <person name="Helton E."/>
            <person name="Ketteman M."/>
            <person name="Madan A."/>
            <person name="Rodrigues S."/>
            <person name="Sanchez A."/>
            <person name="Dasch G."/>
            <person name="Eremeeva M."/>
        </authorList>
    </citation>
    <scope>NUCLEOTIDE SEQUENCE [LARGE SCALE GENOMIC DNA]</scope>
    <source>
        <strain>Sheila Smith</strain>
    </source>
</reference>
<evidence type="ECO:0000255" key="1">
    <source>
        <dbReference type="HAMAP-Rule" id="MF_00003"/>
    </source>
</evidence>
<dbReference type="EMBL" id="CP000848">
    <property type="protein sequence ID" value="ABV76214.1"/>
    <property type="molecule type" value="Genomic_DNA"/>
</dbReference>
<dbReference type="RefSeq" id="WP_012150799.1">
    <property type="nucleotide sequence ID" value="NZ_CP121767.1"/>
</dbReference>
<dbReference type="SMR" id="A8GS39"/>
<dbReference type="GeneID" id="79937350"/>
<dbReference type="KEGG" id="rri:A1G_03415"/>
<dbReference type="HOGENOM" id="CLU_089475_1_0_5"/>
<dbReference type="Proteomes" id="UP000006832">
    <property type="component" value="Chromosome"/>
</dbReference>
<dbReference type="GO" id="GO:0005829">
    <property type="term" value="C:cytosol"/>
    <property type="evidence" value="ECO:0007669"/>
    <property type="project" value="TreeGrafter"/>
</dbReference>
<dbReference type="GO" id="GO:0043024">
    <property type="term" value="F:ribosomal small subunit binding"/>
    <property type="evidence" value="ECO:0007669"/>
    <property type="project" value="TreeGrafter"/>
</dbReference>
<dbReference type="GO" id="GO:0030490">
    <property type="term" value="P:maturation of SSU-rRNA"/>
    <property type="evidence" value="ECO:0007669"/>
    <property type="project" value="UniProtKB-UniRule"/>
</dbReference>
<dbReference type="Gene3D" id="3.30.300.20">
    <property type="match status" value="1"/>
</dbReference>
<dbReference type="HAMAP" id="MF_00003">
    <property type="entry name" value="RbfA"/>
    <property type="match status" value="1"/>
</dbReference>
<dbReference type="InterPro" id="IPR015946">
    <property type="entry name" value="KH_dom-like_a/b"/>
</dbReference>
<dbReference type="InterPro" id="IPR000238">
    <property type="entry name" value="RbfA"/>
</dbReference>
<dbReference type="InterPro" id="IPR023799">
    <property type="entry name" value="RbfA_dom_sf"/>
</dbReference>
<dbReference type="InterPro" id="IPR020053">
    <property type="entry name" value="Ribosome-bd_factorA_CS"/>
</dbReference>
<dbReference type="NCBIfam" id="NF001799">
    <property type="entry name" value="PRK00521.2-2"/>
    <property type="match status" value="1"/>
</dbReference>
<dbReference type="NCBIfam" id="TIGR00082">
    <property type="entry name" value="rbfA"/>
    <property type="match status" value="1"/>
</dbReference>
<dbReference type="PANTHER" id="PTHR33515">
    <property type="entry name" value="RIBOSOME-BINDING FACTOR A, CHLOROPLASTIC-RELATED"/>
    <property type="match status" value="1"/>
</dbReference>
<dbReference type="PANTHER" id="PTHR33515:SF1">
    <property type="entry name" value="RIBOSOME-BINDING FACTOR A, CHLOROPLASTIC-RELATED"/>
    <property type="match status" value="1"/>
</dbReference>
<dbReference type="Pfam" id="PF02033">
    <property type="entry name" value="RBFA"/>
    <property type="match status" value="1"/>
</dbReference>
<dbReference type="SUPFAM" id="SSF89919">
    <property type="entry name" value="Ribosome-binding factor A, RbfA"/>
    <property type="match status" value="1"/>
</dbReference>
<dbReference type="PROSITE" id="PS01319">
    <property type="entry name" value="RBFA"/>
    <property type="match status" value="1"/>
</dbReference>
<feature type="chain" id="PRO_1000000194" description="Ribosome-binding factor A">
    <location>
        <begin position="1"/>
        <end position="120"/>
    </location>
</feature>
<protein>
    <recommendedName>
        <fullName evidence="1">Ribosome-binding factor A</fullName>
    </recommendedName>
</protein>